<feature type="chain" id="PRO_1000138314" description="UPF0434 protein HSM_0997">
    <location>
        <begin position="1"/>
        <end position="65"/>
    </location>
</feature>
<sequence length="65" mass="7280">MNGRLLEIVACPICQGRLKYDSENEQLICHFDHIAYPIKQGIPILLSDQAIGLSTSLTNPEQQNQ</sequence>
<comment type="similarity">
    <text evidence="1">Belongs to the UPF0434 family.</text>
</comment>
<gene>
    <name type="ordered locus">HSM_0997</name>
</gene>
<proteinExistence type="inferred from homology"/>
<name>Y997_HISS2</name>
<organism>
    <name type="scientific">Histophilus somni (strain 2336)</name>
    <name type="common">Haemophilus somnus</name>
    <dbReference type="NCBI Taxonomy" id="228400"/>
    <lineage>
        <taxon>Bacteria</taxon>
        <taxon>Pseudomonadati</taxon>
        <taxon>Pseudomonadota</taxon>
        <taxon>Gammaproteobacteria</taxon>
        <taxon>Pasteurellales</taxon>
        <taxon>Pasteurellaceae</taxon>
        <taxon>Histophilus</taxon>
    </lineage>
</organism>
<reference key="1">
    <citation type="submission" date="2008-02" db="EMBL/GenBank/DDBJ databases">
        <title>Complete sequence of Haemophilus somnus 2336.</title>
        <authorList>
            <consortium name="US DOE Joint Genome Institute"/>
            <person name="Siddaramappa S."/>
            <person name="Duncan A.J."/>
            <person name="Challacombe J.F."/>
            <person name="Rainey D."/>
            <person name="Gillaspy A.F."/>
            <person name="Carson M."/>
            <person name="Gipson J."/>
            <person name="Gipson M."/>
            <person name="Bruce D."/>
            <person name="Detter J.C."/>
            <person name="Han C.S."/>
            <person name="Land M."/>
            <person name="Tapia R."/>
            <person name="Thompson L.S."/>
            <person name="Orvis J."/>
            <person name="Zaitshik J."/>
            <person name="Barnes G."/>
            <person name="Brettin T.S."/>
            <person name="Dyer D.W."/>
            <person name="Inzana T.J."/>
        </authorList>
    </citation>
    <scope>NUCLEOTIDE SEQUENCE [LARGE SCALE GENOMIC DNA]</scope>
    <source>
        <strain>2336</strain>
    </source>
</reference>
<protein>
    <recommendedName>
        <fullName evidence="1">UPF0434 protein HSM_0997</fullName>
    </recommendedName>
</protein>
<accession>B0UT78</accession>
<dbReference type="EMBL" id="CP000947">
    <property type="protein sequence ID" value="ACA32684.1"/>
    <property type="molecule type" value="Genomic_DNA"/>
</dbReference>
<dbReference type="RefSeq" id="WP_012341795.1">
    <property type="nucleotide sequence ID" value="NC_010519.1"/>
</dbReference>
<dbReference type="SMR" id="B0UT78"/>
<dbReference type="STRING" id="228400.HSM_0997"/>
<dbReference type="GeneID" id="31487295"/>
<dbReference type="KEGG" id="hsm:HSM_0997"/>
<dbReference type="HOGENOM" id="CLU_155659_3_1_6"/>
<dbReference type="GO" id="GO:0005829">
    <property type="term" value="C:cytosol"/>
    <property type="evidence" value="ECO:0007669"/>
    <property type="project" value="TreeGrafter"/>
</dbReference>
<dbReference type="Gene3D" id="2.20.25.10">
    <property type="match status" value="1"/>
</dbReference>
<dbReference type="HAMAP" id="MF_01187">
    <property type="entry name" value="UPF0434"/>
    <property type="match status" value="1"/>
</dbReference>
<dbReference type="InterPro" id="IPR005651">
    <property type="entry name" value="Trm112-like"/>
</dbReference>
<dbReference type="PANTHER" id="PTHR33505:SF4">
    <property type="entry name" value="PROTEIN PREY, MITOCHONDRIAL"/>
    <property type="match status" value="1"/>
</dbReference>
<dbReference type="PANTHER" id="PTHR33505">
    <property type="entry name" value="ZGC:162634"/>
    <property type="match status" value="1"/>
</dbReference>
<dbReference type="Pfam" id="PF03966">
    <property type="entry name" value="Trm112p"/>
    <property type="match status" value="1"/>
</dbReference>
<dbReference type="SUPFAM" id="SSF158997">
    <property type="entry name" value="Trm112p-like"/>
    <property type="match status" value="1"/>
</dbReference>
<evidence type="ECO:0000255" key="1">
    <source>
        <dbReference type="HAMAP-Rule" id="MF_01187"/>
    </source>
</evidence>